<comment type="function">
    <text evidence="2 3 6">Methyltransferase; part of the gene cluster that mediates the biosynthesis of paraherquamide, a fungal indole alkaloid that belongs to a family of natural products containing a characteristic bicyclo[2.2.2]diazaoctane core (PubMed:23213353). The first steps in the biosynthesis of paraherquamide is the production of the beta-methyl-proline precursor from L-isoleucine (Probable). They require oxidation of a terminally hydroxylated L-isoleucine to the corresponding aldehyde by enzymes which have still to be identified (Probable). Spontaneous cyclization and dehydration would yield the 4-methyl pyrolline-5-carboxylic acid, which is then reduced by the pyrroline-5-carboxylate reductase phqD leading to the beta-methyl-proline precursor (Probable). The next step of paraherquamide biosynthesis involves coupling of beta-methyl-proline and L-tryptophan by the bimodular NRPS phqB, to produce a monooxopiperazine intermediate (Probable). The reductase (R) domain of phqB utilizes NADPH for hydride transfer to reduce the thioester bond of the T domain-tethered linear dipeptide to a hemithioaminal intermediate, which spontaneously cleaves the C-S bond to release the aldehyde product (PubMed:31548667). This compound undergoes spontaneous cyclization and dehydration to give a dienamine which is reverse prenylated at C-2 by the reverse prenyltransferase phqJ (Probable). The other prenyltransferase present in the cluster, phqI may be a redundant gene in the pathway (Probable). During biosynthetic assembly, the key step to produce the polycyclic core is catalyzed by the bifunctional reductase and intramolecular [4+2] Diels-Alderase, phqE, resulting in formation of the [2.2.2] diazaoctane intermediate preparaherquamide (PubMed:31548667). Following formation of preparaherquamide, an indole 2,3-epoxidation-initiated pinacol-like rearrangement is catalyzed by the phqK FAD-dependent monooxygenase (Probable). The prenyltransferase phqA, the cytochrome P450 monooxygenase phqL, and the FAD-linked oxidoreductase phqH (or the cytochrome P450 monooxygenase phqM), are proposed to be involved in the formation of the pyran ring (Probable). The FAD-dependent monooxygenase phqK is likely responsible for generation of the spiro-oxindole, and the N-methylation is likely mediated by the phqN methyltransferase leading to the isolable natural product paraherquamide F (Probable). However, the order of these biosynthetic steps has still to be determined (Probable). In late-stage paraherquamide biosynthesis, the third P450 monooxygenase, phqO, is probably responsible for the C-14 hydroxylation, transforming paraherquamide F to paraherquamide G, and paraherquamide E to the final product paraherquamide A (Probable). The expansion from the 6-membered ring pyran (in paraherquamides F and G) to the 7-membered dioxepin ring (in paraherquamides A and E) represents a poorly understood but intriguing process that probably involves the 2-oxoglutarate-dependent dioxygenase phqC (Probable). Finally, the remaining members of the paraherquamide cluster, including phqI as well as phqM (or phqH), do not have a clearly prescribed role and appear to be redundant (Probable).</text>
</comment>
<comment type="pathway">
    <text evidence="6">Alkaloid biosynthesis.</text>
</comment>
<comment type="similarity">
    <text evidence="1">Belongs to the class I-like SAM-binding methyltransferase superfamily. Erg6/SMT family.</text>
</comment>
<comment type="sequence caution" evidence="5">
    <conflict type="erroneous gene model prediction">
        <sequence resource="EMBL-CDS" id="AGA37281"/>
    </conflict>
</comment>
<accession>L0E172</accession>
<feature type="chain" id="PRO_0000448876" description="Methyltransferase phqN">
    <location>
        <begin position="1"/>
        <end position="326"/>
    </location>
</feature>
<reference key="1">
    <citation type="journal article" date="2012" name="Med. Chem. Commun.">
        <title>Comparative analysis of the biosynthetic systems for fungal bicyclo[2.2.2]diazaoctane indole alkaloids: the (+)/(-)-notoamide, paraherquamide and malbrancheamide pathways.</title>
        <authorList>
            <person name="Li S."/>
            <person name="Anand K."/>
            <person name="Tran H."/>
            <person name="Yu F."/>
            <person name="Finefield J.M."/>
            <person name="Sunderhaus J.D."/>
            <person name="McAfoos T.J."/>
            <person name="Tsukamoto S."/>
            <person name="Williams R.M."/>
            <person name="Sherman D.H."/>
        </authorList>
    </citation>
    <scope>NUCLEOTIDE SEQUENCE [GENOMIC DNA]</scope>
    <scope>FUNCTION</scope>
    <scope>PATHWAY</scope>
    <source>
        <strain>ATCC 20841 / MF5123</strain>
    </source>
</reference>
<reference key="2">
    <citation type="journal article" date="2019" name="Nat. Chem.">
        <title>Fungal indole alkaloid biogenesis through evolution of a bifunctional reductase/Diels-Alderase.</title>
        <authorList>
            <person name="Dan Q."/>
            <person name="Newmister S.A."/>
            <person name="Klas K.R."/>
            <person name="Fraley A.E."/>
            <person name="McAfoos T.J."/>
            <person name="Somoza A.D."/>
            <person name="Sunderhaus J.D."/>
            <person name="Ye Y."/>
            <person name="Shende V.V."/>
            <person name="Yu F."/>
            <person name="Sanders J.N."/>
            <person name="Brown W.C."/>
            <person name="Zhao L."/>
            <person name="Paton R.S."/>
            <person name="Houk K.N."/>
            <person name="Smith J.L."/>
            <person name="Sherman D.H."/>
            <person name="Williams R.M."/>
        </authorList>
    </citation>
    <scope>FUNCTION</scope>
</reference>
<proteinExistence type="inferred from homology"/>
<sequence>MTMSQMNQDAEGYFRVWKPEEASPGHQESPEELDSGRMCGHLCRLSPNEPMAQSLVRHEHYLAHRVNIQEGQRIIDLGCGIGNPARSIARFTGANITGLNINAQQLRQARQLTQEAGLSYQVNFVEQNFLKIEFADDTFDGAYAIESTCYAPDLVEVYSEIFRVLKPGARFGVYEAVLTDKYDDNNPMHREVKTNIERGGGLARIHTSAEAIAAMKAVGFEVLAIDDLGARPDQIPWETQLSDPFLEKQGLLSFALLSVFFAARAMPLINRGLQAVVGKLEQMTVFPAGSQKVVDLVVTILDGMYRGGELGIFSPMFLIVARKPEA</sequence>
<gene>
    <name evidence="4" type="primary">phqN</name>
</gene>
<protein>
    <recommendedName>
        <fullName evidence="4">Methyltransferase phqN</fullName>
        <ecNumber evidence="6">2.1.1.-</ecNumber>
    </recommendedName>
    <alternativeName>
        <fullName evidence="4">Paraherquamide biosynthesis cluster protein N</fullName>
    </alternativeName>
</protein>
<dbReference type="EC" id="2.1.1.-" evidence="6"/>
<dbReference type="EMBL" id="JQ708195">
    <property type="protein sequence ID" value="AGA37281.1"/>
    <property type="status" value="ALT_SEQ"/>
    <property type="molecule type" value="Genomic_DNA"/>
</dbReference>
<dbReference type="SMR" id="L0E172"/>
<dbReference type="GO" id="GO:0005783">
    <property type="term" value="C:endoplasmic reticulum"/>
    <property type="evidence" value="ECO:0007669"/>
    <property type="project" value="TreeGrafter"/>
</dbReference>
<dbReference type="GO" id="GO:0003838">
    <property type="term" value="F:sterol 24-C-methyltransferase activity"/>
    <property type="evidence" value="ECO:0007669"/>
    <property type="project" value="TreeGrafter"/>
</dbReference>
<dbReference type="GO" id="GO:0032259">
    <property type="term" value="P:methylation"/>
    <property type="evidence" value="ECO:0007669"/>
    <property type="project" value="UniProtKB-KW"/>
</dbReference>
<dbReference type="GO" id="GO:0016126">
    <property type="term" value="P:sterol biosynthetic process"/>
    <property type="evidence" value="ECO:0007669"/>
    <property type="project" value="TreeGrafter"/>
</dbReference>
<dbReference type="CDD" id="cd02440">
    <property type="entry name" value="AdoMet_MTases"/>
    <property type="match status" value="1"/>
</dbReference>
<dbReference type="Gene3D" id="3.40.50.150">
    <property type="entry name" value="Vaccinia Virus protein VP39"/>
    <property type="match status" value="1"/>
</dbReference>
<dbReference type="InterPro" id="IPR050447">
    <property type="entry name" value="Erg6_SMT_methyltransf"/>
</dbReference>
<dbReference type="InterPro" id="IPR013216">
    <property type="entry name" value="Methyltransf_11"/>
</dbReference>
<dbReference type="InterPro" id="IPR030384">
    <property type="entry name" value="MeTrfase_SMT"/>
</dbReference>
<dbReference type="InterPro" id="IPR029063">
    <property type="entry name" value="SAM-dependent_MTases_sf"/>
</dbReference>
<dbReference type="InterPro" id="IPR013705">
    <property type="entry name" value="Sterol_MeTrfase_C"/>
</dbReference>
<dbReference type="PANTHER" id="PTHR44068:SF1">
    <property type="entry name" value="HYPOTHETICAL LOC100005854"/>
    <property type="match status" value="1"/>
</dbReference>
<dbReference type="PANTHER" id="PTHR44068">
    <property type="entry name" value="ZGC:194242"/>
    <property type="match status" value="1"/>
</dbReference>
<dbReference type="Pfam" id="PF08241">
    <property type="entry name" value="Methyltransf_11"/>
    <property type="match status" value="1"/>
</dbReference>
<dbReference type="Pfam" id="PF08498">
    <property type="entry name" value="Sterol_MT_C"/>
    <property type="match status" value="1"/>
</dbReference>
<dbReference type="SUPFAM" id="SSF53335">
    <property type="entry name" value="S-adenosyl-L-methionine-dependent methyltransferases"/>
    <property type="match status" value="1"/>
</dbReference>
<dbReference type="PROSITE" id="PS51685">
    <property type="entry name" value="SAM_MT_ERG6_SMT"/>
    <property type="match status" value="1"/>
</dbReference>
<evidence type="ECO:0000255" key="1">
    <source>
        <dbReference type="PROSITE-ProRule" id="PRU01022"/>
    </source>
</evidence>
<evidence type="ECO:0000269" key="2">
    <source>
    </source>
</evidence>
<evidence type="ECO:0000269" key="3">
    <source>
    </source>
</evidence>
<evidence type="ECO:0000303" key="4">
    <source>
    </source>
</evidence>
<evidence type="ECO:0000305" key="5"/>
<evidence type="ECO:0000305" key="6">
    <source>
    </source>
</evidence>
<organism>
    <name type="scientific">Penicillium fellutanum</name>
    <dbReference type="NCBI Taxonomy" id="70095"/>
    <lineage>
        <taxon>Eukaryota</taxon>
        <taxon>Fungi</taxon>
        <taxon>Dikarya</taxon>
        <taxon>Ascomycota</taxon>
        <taxon>Pezizomycotina</taxon>
        <taxon>Eurotiomycetes</taxon>
        <taxon>Eurotiomycetidae</taxon>
        <taxon>Eurotiales</taxon>
        <taxon>Aspergillaceae</taxon>
        <taxon>Penicillium</taxon>
    </lineage>
</organism>
<name>PHQN_PENFE</name>
<keyword id="KW-0489">Methyltransferase</keyword>
<keyword id="KW-0949">S-adenosyl-L-methionine</keyword>
<keyword id="KW-0808">Transferase</keyword>